<dbReference type="EMBL" id="AM942759">
    <property type="protein sequence ID" value="CAR43940.1"/>
    <property type="molecule type" value="Genomic_DNA"/>
</dbReference>
<dbReference type="RefSeq" id="WP_004248459.1">
    <property type="nucleotide sequence ID" value="NC_010554.1"/>
</dbReference>
<dbReference type="SMR" id="B4F057"/>
<dbReference type="EnsemblBacteria" id="CAR43940">
    <property type="protein sequence ID" value="CAR43940"/>
    <property type="gene ID" value="PMI1898"/>
</dbReference>
<dbReference type="GeneID" id="6803043"/>
<dbReference type="KEGG" id="pmr:PMI1898"/>
<dbReference type="eggNOG" id="COG3445">
    <property type="taxonomic scope" value="Bacteria"/>
</dbReference>
<dbReference type="HOGENOM" id="CLU_133780_0_0_6"/>
<dbReference type="Proteomes" id="UP000008319">
    <property type="component" value="Chromosome"/>
</dbReference>
<dbReference type="GO" id="GO:0005829">
    <property type="term" value="C:cytosol"/>
    <property type="evidence" value="ECO:0007669"/>
    <property type="project" value="TreeGrafter"/>
</dbReference>
<dbReference type="GO" id="GO:0008861">
    <property type="term" value="F:formate C-acetyltransferase activity"/>
    <property type="evidence" value="ECO:0007669"/>
    <property type="project" value="TreeGrafter"/>
</dbReference>
<dbReference type="FunFam" id="3.20.70.20:FF:000002">
    <property type="entry name" value="Autonomous glycyl radical cofactor"/>
    <property type="match status" value="1"/>
</dbReference>
<dbReference type="Gene3D" id="3.20.70.20">
    <property type="match status" value="1"/>
</dbReference>
<dbReference type="HAMAP" id="MF_00806">
    <property type="entry name" value="GrcA"/>
    <property type="match status" value="1"/>
</dbReference>
<dbReference type="InterPro" id="IPR050244">
    <property type="entry name" value="Auton_GlycylRad_Cofactor"/>
</dbReference>
<dbReference type="InterPro" id="IPR019777">
    <property type="entry name" value="Form_AcTrfase_GR_CS"/>
</dbReference>
<dbReference type="InterPro" id="IPR001150">
    <property type="entry name" value="Gly_radical"/>
</dbReference>
<dbReference type="InterPro" id="IPR011140">
    <property type="entry name" value="Glycyl_radical_cofactor_GrcA"/>
</dbReference>
<dbReference type="NCBIfam" id="TIGR04365">
    <property type="entry name" value="spare_glycyl"/>
    <property type="match status" value="1"/>
</dbReference>
<dbReference type="PANTHER" id="PTHR30191">
    <property type="entry name" value="FORMATE ACETYLTRANSFERASE"/>
    <property type="match status" value="1"/>
</dbReference>
<dbReference type="PANTHER" id="PTHR30191:SF0">
    <property type="entry name" value="FORMATE ACETYLTRANSFERASE 1"/>
    <property type="match status" value="1"/>
</dbReference>
<dbReference type="Pfam" id="PF01228">
    <property type="entry name" value="Gly_radical"/>
    <property type="match status" value="1"/>
</dbReference>
<dbReference type="PIRSF" id="PIRSF000378">
    <property type="entry name" value="Gly_radicl_yfiD"/>
    <property type="match status" value="1"/>
</dbReference>
<dbReference type="SUPFAM" id="SSF51998">
    <property type="entry name" value="PFL-like glycyl radical enzymes"/>
    <property type="match status" value="1"/>
</dbReference>
<dbReference type="PROSITE" id="PS00850">
    <property type="entry name" value="GLY_RADICAL_1"/>
    <property type="match status" value="1"/>
</dbReference>
<dbReference type="PROSITE" id="PS51149">
    <property type="entry name" value="GLY_RADICAL_2"/>
    <property type="match status" value="1"/>
</dbReference>
<name>GRCA_PROMH</name>
<organism>
    <name type="scientific">Proteus mirabilis (strain HI4320)</name>
    <dbReference type="NCBI Taxonomy" id="529507"/>
    <lineage>
        <taxon>Bacteria</taxon>
        <taxon>Pseudomonadati</taxon>
        <taxon>Pseudomonadota</taxon>
        <taxon>Gammaproteobacteria</taxon>
        <taxon>Enterobacterales</taxon>
        <taxon>Morganellaceae</taxon>
        <taxon>Proteus</taxon>
    </lineage>
</organism>
<protein>
    <recommendedName>
        <fullName evidence="1">Autonomous glycyl radical cofactor</fullName>
    </recommendedName>
</protein>
<proteinExistence type="inferred from homology"/>
<accession>B4F057</accession>
<reference key="1">
    <citation type="journal article" date="2008" name="J. Bacteriol.">
        <title>Complete genome sequence of uropathogenic Proteus mirabilis, a master of both adherence and motility.</title>
        <authorList>
            <person name="Pearson M.M."/>
            <person name="Sebaihia M."/>
            <person name="Churcher C."/>
            <person name="Quail M.A."/>
            <person name="Seshasayee A.S."/>
            <person name="Luscombe N.M."/>
            <person name="Abdellah Z."/>
            <person name="Arrosmith C."/>
            <person name="Atkin B."/>
            <person name="Chillingworth T."/>
            <person name="Hauser H."/>
            <person name="Jagels K."/>
            <person name="Moule S."/>
            <person name="Mungall K."/>
            <person name="Norbertczak H."/>
            <person name="Rabbinowitsch E."/>
            <person name="Walker D."/>
            <person name="Whithead S."/>
            <person name="Thomson N.R."/>
            <person name="Rather P.N."/>
            <person name="Parkhill J."/>
            <person name="Mobley H.L.T."/>
        </authorList>
    </citation>
    <scope>NUCLEOTIDE SEQUENCE [LARGE SCALE GENOMIC DNA]</scope>
    <source>
        <strain>HI4320</strain>
    </source>
</reference>
<feature type="chain" id="PRO_1000133992" description="Autonomous glycyl radical cofactor">
    <location>
        <begin position="1"/>
        <end position="127"/>
    </location>
</feature>
<feature type="domain" description="Glycine radical" evidence="1">
    <location>
        <begin position="5"/>
        <end position="127"/>
    </location>
</feature>
<feature type="modified residue" description="Glycine radical" evidence="1">
    <location>
        <position position="102"/>
    </location>
</feature>
<comment type="function">
    <text evidence="1">Acts as a radical domain for damaged PFL and possibly other radical proteins.</text>
</comment>
<sequence length="127" mass="14334">MITGIQITKADNDDLLHSFWLLDDENGEARCICAKKGFEEGQVVSRDALGNIEYREVPVESKPVVRVEGGQHLNVNVLSRETLEDAVNNPEKYPQLTIRVSGYAVRFNSLTPEQQRDVITRTFTESL</sequence>
<keyword id="KW-0556">Organic radical</keyword>
<keyword id="KW-1185">Reference proteome</keyword>
<evidence type="ECO:0000255" key="1">
    <source>
        <dbReference type="HAMAP-Rule" id="MF_00806"/>
    </source>
</evidence>
<gene>
    <name evidence="1" type="primary">grcA</name>
    <name type="ordered locus">PMI1898</name>
</gene>